<comment type="function">
    <text evidence="1">Binds to 23S rRNA. Forms part of two intersubunit bridges in the 70S ribosome.</text>
</comment>
<comment type="subunit">
    <text evidence="1">Part of the 50S ribosomal subunit. Forms a cluster with proteins L3 and L24e, part of which may contact the 16S rRNA in 2 intersubunit bridges.</text>
</comment>
<comment type="similarity">
    <text evidence="1">Belongs to the universal ribosomal protein uL14 family.</text>
</comment>
<reference key="1">
    <citation type="journal article" date="2006" name="J. Bacteriol.">
        <title>The Methanosarcina barkeri genome: comparative analysis with Methanosarcina acetivorans and Methanosarcina mazei reveals extensive rearrangement within methanosarcinal genomes.</title>
        <authorList>
            <person name="Maeder D.L."/>
            <person name="Anderson I."/>
            <person name="Brettin T.S."/>
            <person name="Bruce D.C."/>
            <person name="Gilna P."/>
            <person name="Han C.S."/>
            <person name="Lapidus A."/>
            <person name="Metcalf W.W."/>
            <person name="Saunders E."/>
            <person name="Tapia R."/>
            <person name="Sowers K.R."/>
        </authorList>
    </citation>
    <scope>NUCLEOTIDE SEQUENCE [LARGE SCALE GENOMIC DNA]</scope>
    <source>
        <strain>Fusaro / DSM 804</strain>
    </source>
</reference>
<proteinExistence type="inferred from homology"/>
<organism>
    <name type="scientific">Methanosarcina barkeri (strain Fusaro / DSM 804)</name>
    <dbReference type="NCBI Taxonomy" id="269797"/>
    <lineage>
        <taxon>Archaea</taxon>
        <taxon>Methanobacteriati</taxon>
        <taxon>Methanobacteriota</taxon>
        <taxon>Stenosarchaea group</taxon>
        <taxon>Methanomicrobia</taxon>
        <taxon>Methanosarcinales</taxon>
        <taxon>Methanosarcinaceae</taxon>
        <taxon>Methanosarcina</taxon>
    </lineage>
</organism>
<protein>
    <recommendedName>
        <fullName evidence="1">Large ribosomal subunit protein uL14</fullName>
    </recommendedName>
    <alternativeName>
        <fullName evidence="2">50S ribosomal protein L14</fullName>
    </alternativeName>
</protein>
<dbReference type="EMBL" id="CP000099">
    <property type="protein sequence ID" value="AAZ69087.1"/>
    <property type="molecule type" value="Genomic_DNA"/>
</dbReference>
<dbReference type="SMR" id="Q46GA5"/>
<dbReference type="STRING" id="269797.Mbar_A0100"/>
<dbReference type="PaxDb" id="269797-Mbar_A0100"/>
<dbReference type="KEGG" id="mba:Mbar_A0100"/>
<dbReference type="eggNOG" id="arCOG04095">
    <property type="taxonomic scope" value="Archaea"/>
</dbReference>
<dbReference type="HOGENOM" id="CLU_095071_3_0_2"/>
<dbReference type="OrthoDB" id="23569at2157"/>
<dbReference type="GO" id="GO:0022625">
    <property type="term" value="C:cytosolic large ribosomal subunit"/>
    <property type="evidence" value="ECO:0007669"/>
    <property type="project" value="TreeGrafter"/>
</dbReference>
<dbReference type="GO" id="GO:0070180">
    <property type="term" value="F:large ribosomal subunit rRNA binding"/>
    <property type="evidence" value="ECO:0007669"/>
    <property type="project" value="TreeGrafter"/>
</dbReference>
<dbReference type="GO" id="GO:0003735">
    <property type="term" value="F:structural constituent of ribosome"/>
    <property type="evidence" value="ECO:0007669"/>
    <property type="project" value="InterPro"/>
</dbReference>
<dbReference type="GO" id="GO:0006412">
    <property type="term" value="P:translation"/>
    <property type="evidence" value="ECO:0007669"/>
    <property type="project" value="UniProtKB-UniRule"/>
</dbReference>
<dbReference type="CDD" id="cd00337">
    <property type="entry name" value="Ribosomal_uL14"/>
    <property type="match status" value="1"/>
</dbReference>
<dbReference type="FunFam" id="2.40.150.20:FF:000007">
    <property type="entry name" value="50S ribosomal protein L14"/>
    <property type="match status" value="1"/>
</dbReference>
<dbReference type="Gene3D" id="2.40.150.20">
    <property type="entry name" value="Ribosomal protein L14"/>
    <property type="match status" value="1"/>
</dbReference>
<dbReference type="HAMAP" id="MF_01367">
    <property type="entry name" value="Ribosomal_uL14"/>
    <property type="match status" value="1"/>
</dbReference>
<dbReference type="InterPro" id="IPR000218">
    <property type="entry name" value="Ribosomal_uL14"/>
</dbReference>
<dbReference type="InterPro" id="IPR019971">
    <property type="entry name" value="Ribosomal_uL14_arc"/>
</dbReference>
<dbReference type="InterPro" id="IPR019972">
    <property type="entry name" value="Ribosomal_uL14_CS"/>
</dbReference>
<dbReference type="InterPro" id="IPR036853">
    <property type="entry name" value="Ribosomal_uL14_sf"/>
</dbReference>
<dbReference type="NCBIfam" id="NF006344">
    <property type="entry name" value="PRK08571.1"/>
    <property type="match status" value="1"/>
</dbReference>
<dbReference type="NCBIfam" id="TIGR03673">
    <property type="entry name" value="uL14_arch"/>
    <property type="match status" value="1"/>
</dbReference>
<dbReference type="PANTHER" id="PTHR11761">
    <property type="entry name" value="50S/60S RIBOSOMAL PROTEIN L14/L23"/>
    <property type="match status" value="1"/>
</dbReference>
<dbReference type="PANTHER" id="PTHR11761:SF8">
    <property type="entry name" value="LARGE RIBOSOMAL SUBUNIT PROTEIN UL14"/>
    <property type="match status" value="1"/>
</dbReference>
<dbReference type="Pfam" id="PF00238">
    <property type="entry name" value="Ribosomal_L14"/>
    <property type="match status" value="1"/>
</dbReference>
<dbReference type="SMART" id="SM01374">
    <property type="entry name" value="Ribosomal_L14"/>
    <property type="match status" value="1"/>
</dbReference>
<dbReference type="SUPFAM" id="SSF50193">
    <property type="entry name" value="Ribosomal protein L14"/>
    <property type="match status" value="1"/>
</dbReference>
<dbReference type="PROSITE" id="PS00049">
    <property type="entry name" value="RIBOSOMAL_L14"/>
    <property type="match status" value="1"/>
</dbReference>
<gene>
    <name evidence="1" type="primary">rpl14</name>
    <name type="ordered locus">Mbar_A0100</name>
</gene>
<accession>Q46GA5</accession>
<sequence>MKGIRSNIPRALNAGAKVPCVDNTGAKVVEIISVKKYRGVKNRMPCAGIGDMCVVSVKKGTPEMRKQVLLAVVVRQKQEFRRPDGLRVSFEDNAMVITDEEGIPKGTDIKGPIAREVAERYPKIGTTASIIV</sequence>
<feature type="chain" id="PRO_0000266604" description="Large ribosomal subunit protein uL14">
    <location>
        <begin position="1"/>
        <end position="132"/>
    </location>
</feature>
<keyword id="KW-0687">Ribonucleoprotein</keyword>
<keyword id="KW-0689">Ribosomal protein</keyword>
<keyword id="KW-0694">RNA-binding</keyword>
<keyword id="KW-0699">rRNA-binding</keyword>
<name>RL14_METBF</name>
<evidence type="ECO:0000255" key="1">
    <source>
        <dbReference type="HAMAP-Rule" id="MF_01367"/>
    </source>
</evidence>
<evidence type="ECO:0000305" key="2"/>